<feature type="chain" id="PRO_0000308329" description="Protein dispatched homolog 3">
    <location>
        <begin position="1"/>
        <end position="1392"/>
    </location>
</feature>
<feature type="topological domain" description="Cytoplasmic" evidence="11">
    <location>
        <begin position="1"/>
        <end position="73"/>
    </location>
</feature>
<feature type="transmembrane region" description="Helical" evidence="2">
    <location>
        <begin position="74"/>
        <end position="94"/>
    </location>
</feature>
<feature type="topological domain" description="Lumenal" evidence="11">
    <location>
        <begin position="95"/>
        <end position="462"/>
    </location>
</feature>
<feature type="transmembrane region" description="Helical" evidence="2">
    <location>
        <begin position="463"/>
        <end position="483"/>
    </location>
</feature>
<feature type="topological domain" description="Cytoplasmic" evidence="11">
    <location>
        <position position="484"/>
    </location>
</feature>
<feature type="transmembrane region" description="Helical" evidence="2">
    <location>
        <begin position="485"/>
        <end position="505"/>
    </location>
</feature>
<feature type="topological domain" description="Lumenal" evidence="11">
    <location>
        <begin position="506"/>
        <end position="508"/>
    </location>
</feature>
<feature type="transmembrane region" description="Helical" evidence="2">
    <location>
        <begin position="509"/>
        <end position="529"/>
    </location>
</feature>
<feature type="topological domain" description="Cytoplasmic" evidence="11">
    <location>
        <begin position="530"/>
        <end position="573"/>
    </location>
</feature>
<feature type="transmembrane region" description="Helical" evidence="2">
    <location>
        <begin position="574"/>
        <end position="594"/>
    </location>
</feature>
<feature type="topological domain" description="Lumenal" evidence="11">
    <location>
        <position position="595"/>
    </location>
</feature>
<feature type="transmembrane region" description="Helical" evidence="2">
    <location>
        <begin position="596"/>
        <end position="616"/>
    </location>
</feature>
<feature type="topological domain" description="Cytoplasmic" evidence="11">
    <location>
        <begin position="617"/>
        <end position="729"/>
    </location>
</feature>
<feature type="transmembrane region" description="Helical" evidence="2">
    <location>
        <begin position="730"/>
        <end position="750"/>
    </location>
</feature>
<feature type="topological domain" description="Lumenal" evidence="11">
    <location>
        <begin position="751"/>
        <end position="1182"/>
    </location>
</feature>
<feature type="transmembrane region" description="Helical" evidence="2">
    <location>
        <begin position="1183"/>
        <end position="1203"/>
    </location>
</feature>
<feature type="topological domain" description="Cytoplasmic" evidence="11">
    <location>
        <position position="1204"/>
    </location>
</feature>
<feature type="transmembrane region" description="Helical" evidence="2">
    <location>
        <begin position="1205"/>
        <end position="1225"/>
    </location>
</feature>
<feature type="topological domain" description="Lumenal" evidence="11">
    <location>
        <begin position="1226"/>
        <end position="1291"/>
    </location>
</feature>
<feature type="transmembrane region" description="Helical" evidence="2">
    <location>
        <begin position="1292"/>
        <end position="1312"/>
    </location>
</feature>
<feature type="topological domain" description="Cytoplasmic" evidence="11">
    <location>
        <begin position="1313"/>
        <end position="1320"/>
    </location>
</feature>
<feature type="transmembrane region" description="Helical" evidence="2">
    <location>
        <begin position="1321"/>
        <end position="1341"/>
    </location>
</feature>
<feature type="topological domain" description="Lumenal" evidence="11">
    <location>
        <begin position="1342"/>
        <end position="1358"/>
    </location>
</feature>
<feature type="transmembrane region" description="Helical" evidence="2">
    <location>
        <begin position="1359"/>
        <end position="1379"/>
    </location>
</feature>
<feature type="topological domain" description="Cytoplasmic" evidence="11">
    <location>
        <begin position="1380"/>
        <end position="1392"/>
    </location>
</feature>
<feature type="domain" description="SSD" evidence="3">
    <location>
        <begin position="457"/>
        <end position="615"/>
    </location>
</feature>
<feature type="region of interest" description="Disordered" evidence="4">
    <location>
        <begin position="16"/>
        <end position="40"/>
    </location>
</feature>
<feature type="region of interest" description="Disordered" evidence="4">
    <location>
        <begin position="162"/>
        <end position="248"/>
    </location>
</feature>
<feature type="compositionally biased region" description="Polar residues" evidence="4">
    <location>
        <begin position="190"/>
        <end position="199"/>
    </location>
</feature>
<feature type="glycosylation site" description="N-linked (GlcNAc...) asparagine" evidence="2">
    <location>
        <position position="163"/>
    </location>
</feature>
<feature type="glycosylation site" description="N-linked (GlcNAc...) asparagine" evidence="2">
    <location>
        <position position="1021"/>
    </location>
</feature>
<feature type="splice variant" id="VSP_028966" description="In isoform 2." evidence="10">
    <location>
        <begin position="934"/>
        <end position="1392"/>
    </location>
</feature>
<feature type="sequence variant" id="VAR_061496" description="In dbSNP:rs41274528.">
    <original>G</original>
    <variation>R</variation>
    <location>
        <position position="39"/>
    </location>
</feature>
<feature type="sequence variant" id="VAR_036796" description="In dbSNP:rs3738159.">
    <original>L</original>
    <variation>V</variation>
    <location>
        <position position="51"/>
    </location>
</feature>
<feature type="sequence variant" id="VAR_036797" description="In dbSNP:rs2817580." evidence="5">
    <original>G</original>
    <variation>S</variation>
    <location>
        <position position="182"/>
    </location>
</feature>
<feature type="sequence variant" id="VAR_036798" description="In dbSNP:rs2072994." evidence="5">
    <original>A</original>
    <variation>T</variation>
    <location>
        <position position="650"/>
    </location>
</feature>
<feature type="sequence variant" id="VAR_036799" description="In dbSNP:rs2072993.">
    <original>G</original>
    <variation>A</variation>
    <location>
        <position position="661"/>
    </location>
</feature>
<feature type="sequence variant" id="VAR_036800" description="In dbSNP:rs12096312.">
    <original>R</original>
    <variation>H</variation>
    <location>
        <position position="948"/>
    </location>
</feature>
<organism>
    <name type="scientific">Homo sapiens</name>
    <name type="common">Human</name>
    <dbReference type="NCBI Taxonomy" id="9606"/>
    <lineage>
        <taxon>Eukaryota</taxon>
        <taxon>Metazoa</taxon>
        <taxon>Chordata</taxon>
        <taxon>Craniata</taxon>
        <taxon>Vertebrata</taxon>
        <taxon>Euteleostomi</taxon>
        <taxon>Mammalia</taxon>
        <taxon>Eutheria</taxon>
        <taxon>Euarchontoglires</taxon>
        <taxon>Primates</taxon>
        <taxon>Haplorrhini</taxon>
        <taxon>Catarrhini</taxon>
        <taxon>Hominidae</taxon>
        <taxon>Homo</taxon>
    </lineage>
</organism>
<comment type="function">
    <text evidence="1 8">Plays a role in neuronal proliferation and differentiation (PubMed:25281927). Plays a role in the accumulation of cellular cholesterol (By similarity). Involved in intracellular lipid droplet formation (PubMed:25281927). May contribute to cholesterol homeostasis in neuronal cells (By similarity).</text>
</comment>
<comment type="subcellular location">
    <subcellularLocation>
        <location evidence="7">Endoplasmic reticulum membrane</location>
        <topology evidence="11">Multi-pass membrane protein</topology>
    </subcellularLocation>
    <subcellularLocation>
        <location evidence="7">Nucleus membrane</location>
        <topology evidence="11">Multi-pass membrane protein</topology>
    </subcellularLocation>
    <subcellularLocation>
        <location evidence="1">Cytoplasmic vesicle membrane</location>
        <topology evidence="11">Multi-pass membrane protein</topology>
    </subcellularLocation>
    <text evidence="1 7">Predominantly localized to cholesterol-enriched domains within the membrane (PubMed:19179482). Localizes to cytoplasmic punctate vesicular structures (By similarity).</text>
</comment>
<comment type="alternative products">
    <event type="alternative splicing"/>
    <isoform>
        <id>Q9P2K9-1</id>
        <name>1</name>
        <sequence type="displayed"/>
    </isoform>
    <isoform>
        <id>Q9P2K9-2</id>
        <name>2</name>
        <sequence type="described" ref="VSP_028966"/>
    </isoform>
</comment>
<comment type="tissue specificity">
    <text evidence="6">Expressed in brain and testis (PubMed:15645143).</text>
</comment>
<comment type="developmental stage">
    <text evidence="6">Expressed in fetal brain (PubMed:15645143).</text>
</comment>
<comment type="induction">
    <text evidence="7">Up-regulated by thyroid hormone T3 (PubMed:19179482).</text>
</comment>
<comment type="domain">
    <text evidence="1">The SSD (sterol-sensing) domain is necessary for the increase in cellular cholesterol uptake.</text>
</comment>
<comment type="similarity">
    <text evidence="11">Belongs to the patched family.</text>
</comment>
<comment type="sequence caution" evidence="11">
    <conflict type="erroneous initiation">
        <sequence resource="EMBL-CDS" id="BAA92575"/>
    </conflict>
</comment>
<comment type="sequence caution" evidence="11">
    <conflict type="erroneous initiation">
        <sequence resource="EMBL-CDS" id="CAB55303"/>
    </conflict>
</comment>
<sequence length="1392" mass="153048">MDTEDDPLLQDVWLEEEQEEEEATGETFLGAQKPGPQPGAGGQCCWRHWPLASRPPASGFWSTLGWAFTNPCCAGLVLFLGCSIPMALSAFMFLYYPPLDIDISYNAFEIRNHEASQRFDALTLALKSQFGSWGRNRRDLADFTSETLQRLISEQLQQLHLGNRSRQASRAPRVIPAASLGGPGPYRDTSAAQKPTANRSGRLRRETPPLEDLAANQSEDPRNQRLSKNGRYQPSIPPHAAVAANQSRARRGASRWDYSRAYVSANTQTHAHWRIELIFLARGDAERNIFTSERLVTIHEIERKIMDHPGFREFCWKPHEVLKDLPLGSYSYCSPPSSLMTYFFPTERGGKIYYDGMGQDLADIRGSLELAMTHPEFYWYVDEGLSADNLKSSLLRSEILFGAPLPNYYSVDDRWEEQRAKFQSFVVTYVAMLAKQSTSKVQVLYGGTDLFDYEVRRTFNNDMLLAFISSSCIAALVYILTSCSVFLSFFGIASIGLSCLVALFLYHVVFGIQYLGILNGVAAFVIVGIGVDDVFVFINTYRQATHLEDPQLRMIHTVQTAGKATFFTSLTTAAAYAANVFSQIPAVHDFGLFMSLIVSCCWLAVLVTMPAALGLWSLYLAPLESSCQTSCHQNCSRKTSLHFPGDVFAAPEQVGGSPAQGPIPYLDDDIPLLEVEEEPVSLELGDVSLVSVSPEGLQPASNTGSRGHLIVQLQELLHHWVLWSAVKSRWVIVGLFVSILILSLVFASRLRPASRAPLLFRPDTNIQVLLDLKYNLSAEGISCITCSGLFQEKPHSLQNNIRTSLEKKRRGSGVPWASRPEATLQDFPGTVYISKVKSQGHPAVYRLSLNASLPAPWQAVSPGDGEVPSFQVYRAPFGNFTKKLTACMSTVGLLQAASPSRKWMLTTLACDAKRGWKFDFSFYVATKEQQHTRKLYFAQSHKPPFHGRVCMAPPGCLLSSSPDGPTKGFFFVPSEKVPKARLSATFGFNPCVNTGCGKPAVRPLVDTGAMVFVVFGIIGVNRTRQVDNHVIGDPGSVVYDSSFDLFKEIGHLCHLCKAIAANSELVKPGGAQCLPSGYSISSFLQMLHPECKELPEPNLLPGQLSHGAVGVREGRVQWISMAFESTTYKGKSSFQTYSDYLRWESFLQQQLQALPEGSVLRRGFQTCEHWKQIFMEIVGVQSALCGLVLSLLICVAAVAVFTTHILLLLPVLLSILGIVCLVVTIMYWSGWEMGAVEAISLSILVGSSVDYCVHLVEGYLLAGENLPPHQAEDARTQRQWRTLEAVRHVGVAIVSSALTTVIATVPLFFCIIAPFAKFGKIVALNTGVSILYTLTVSTALLGIMAPSSFTRTRTSFLKALGAVLLAGALGLGACLVLLQSGYKIPLPAGASL</sequence>
<name>DISP3_HUMAN</name>
<evidence type="ECO:0000250" key="1">
    <source>
        <dbReference type="UniProtKB" id="B9U3F2"/>
    </source>
</evidence>
<evidence type="ECO:0000255" key="2"/>
<evidence type="ECO:0000255" key="3">
    <source>
        <dbReference type="PROSITE-ProRule" id="PRU00199"/>
    </source>
</evidence>
<evidence type="ECO:0000256" key="4">
    <source>
        <dbReference type="SAM" id="MobiDB-lite"/>
    </source>
</evidence>
<evidence type="ECO:0000269" key="5">
    <source>
    </source>
</evidence>
<evidence type="ECO:0000269" key="6">
    <source>
    </source>
</evidence>
<evidence type="ECO:0000269" key="7">
    <source>
    </source>
</evidence>
<evidence type="ECO:0000269" key="8">
    <source>
    </source>
</evidence>
<evidence type="ECO:0000303" key="9">
    <source>
    </source>
</evidence>
<evidence type="ECO:0000303" key="10">
    <source ref="3"/>
</evidence>
<evidence type="ECO:0000305" key="11"/>
<evidence type="ECO:0000312" key="12">
    <source>
        <dbReference type="HGNC" id="HGNC:29251"/>
    </source>
</evidence>
<protein>
    <recommendedName>
        <fullName evidence="9">Protein dispatched homolog 3</fullName>
    </recommendedName>
    <alternativeName>
        <fullName evidence="11">Patched domain-containing protein 2</fullName>
    </alternativeName>
</protein>
<accession>Q9P2K9</accession>
<accession>Q5VTU9</accession>
<accession>Q9UJD6</accession>
<proteinExistence type="evidence at protein level"/>
<dbReference type="EMBL" id="AB037758">
    <property type="protein sequence ID" value="BAA92575.1"/>
    <property type="status" value="ALT_INIT"/>
    <property type="molecule type" value="mRNA"/>
</dbReference>
<dbReference type="EMBL" id="AL031735">
    <property type="status" value="NOT_ANNOTATED_CDS"/>
    <property type="molecule type" value="Genomic_DNA"/>
</dbReference>
<dbReference type="EMBL" id="AL590989">
    <property type="status" value="NOT_ANNOTATED_CDS"/>
    <property type="molecule type" value="Genomic_DNA"/>
</dbReference>
<dbReference type="EMBL" id="AL117236">
    <property type="protein sequence ID" value="CAB55303.1"/>
    <property type="status" value="ALT_INIT"/>
    <property type="molecule type" value="mRNA"/>
</dbReference>
<dbReference type="CCDS" id="CCDS41247.1">
    <molecule id="Q9P2K9-1"/>
</dbReference>
<dbReference type="RefSeq" id="NP_065831.1">
    <molecule id="Q9P2K9-1"/>
    <property type="nucleotide sequence ID" value="NM_020780.2"/>
</dbReference>
<dbReference type="RefSeq" id="XP_011540130.1">
    <molecule id="Q9P2K9-1"/>
    <property type="nucleotide sequence ID" value="XM_011541828.4"/>
</dbReference>
<dbReference type="RefSeq" id="XP_054193797.1">
    <molecule id="Q9P2K9-1"/>
    <property type="nucleotide sequence ID" value="XM_054337822.1"/>
</dbReference>
<dbReference type="BioGRID" id="121599">
    <property type="interactions" value="9"/>
</dbReference>
<dbReference type="FunCoup" id="Q9P2K9">
    <property type="interactions" value="253"/>
</dbReference>
<dbReference type="IntAct" id="Q9P2K9">
    <property type="interactions" value="6"/>
</dbReference>
<dbReference type="STRING" id="9606.ENSP00000294484"/>
<dbReference type="GlyCosmos" id="Q9P2K9">
    <property type="glycosylation" value="2 sites, No reported glycans"/>
</dbReference>
<dbReference type="GlyGen" id="Q9P2K9">
    <property type="glycosylation" value="4 sites, 1 N-linked glycan (1 site), 1 O-linked glycan (1 site)"/>
</dbReference>
<dbReference type="iPTMnet" id="Q9P2K9"/>
<dbReference type="PhosphoSitePlus" id="Q9P2K9"/>
<dbReference type="BioMuta" id="DISP3"/>
<dbReference type="DMDM" id="160017977"/>
<dbReference type="MassIVE" id="Q9P2K9"/>
<dbReference type="PaxDb" id="9606-ENSP00000294484"/>
<dbReference type="PeptideAtlas" id="Q9P2K9"/>
<dbReference type="ProteomicsDB" id="83841">
    <molecule id="Q9P2K9-1"/>
</dbReference>
<dbReference type="ProteomicsDB" id="83842">
    <molecule id="Q9P2K9-2"/>
</dbReference>
<dbReference type="Antibodypedia" id="57337">
    <property type="antibodies" value="151 antibodies from 25 providers"/>
</dbReference>
<dbReference type="DNASU" id="57540"/>
<dbReference type="Ensembl" id="ENST00000294484.7">
    <molecule id="Q9P2K9-1"/>
    <property type="protein sequence ID" value="ENSP00000294484.6"/>
    <property type="gene ID" value="ENSG00000204624.8"/>
</dbReference>
<dbReference type="GeneID" id="57540"/>
<dbReference type="KEGG" id="hsa:57540"/>
<dbReference type="MANE-Select" id="ENST00000294484.7">
    <property type="protein sequence ID" value="ENSP00000294484.6"/>
    <property type="RefSeq nucleotide sequence ID" value="NM_020780.2"/>
    <property type="RefSeq protein sequence ID" value="NP_065831.1"/>
</dbReference>
<dbReference type="UCSC" id="uc001ash.5">
    <molecule id="Q9P2K9-1"/>
    <property type="organism name" value="human"/>
</dbReference>
<dbReference type="AGR" id="HGNC:29251"/>
<dbReference type="CTD" id="57540"/>
<dbReference type="DisGeNET" id="57540"/>
<dbReference type="GeneCards" id="DISP3"/>
<dbReference type="HGNC" id="HGNC:29251">
    <property type="gene designation" value="DISP3"/>
</dbReference>
<dbReference type="HPA" id="ENSG00000204624">
    <property type="expression patterns" value="Group enriched (brain, pituitary gland, retina, testis)"/>
</dbReference>
<dbReference type="MIM" id="611251">
    <property type="type" value="gene"/>
</dbReference>
<dbReference type="neXtProt" id="NX_Q9P2K9"/>
<dbReference type="OpenTargets" id="ENSG00000204624"/>
<dbReference type="PharmGKB" id="PA142671116"/>
<dbReference type="VEuPathDB" id="HostDB:ENSG00000204624"/>
<dbReference type="eggNOG" id="KOG3664">
    <property type="taxonomic scope" value="Eukaryota"/>
</dbReference>
<dbReference type="GeneTree" id="ENSGT00940000157931"/>
<dbReference type="HOGENOM" id="CLU_007038_0_0_1"/>
<dbReference type="InParanoid" id="Q9P2K9"/>
<dbReference type="OMA" id="RWDYSRT"/>
<dbReference type="OrthoDB" id="429851at2759"/>
<dbReference type="PAN-GO" id="Q9P2K9">
    <property type="GO annotations" value="1 GO annotation based on evolutionary models"/>
</dbReference>
<dbReference type="PhylomeDB" id="Q9P2K9"/>
<dbReference type="TreeFam" id="TF331579"/>
<dbReference type="PathwayCommons" id="Q9P2K9"/>
<dbReference type="SignaLink" id="Q9P2K9"/>
<dbReference type="BioGRID-ORCS" id="57540">
    <property type="hits" value="10 hits in 1142 CRISPR screens"/>
</dbReference>
<dbReference type="GenomeRNAi" id="57540"/>
<dbReference type="Pharos" id="Q9P2K9">
    <property type="development level" value="Tbio"/>
</dbReference>
<dbReference type="PRO" id="PR:Q9P2K9"/>
<dbReference type="Proteomes" id="UP000005640">
    <property type="component" value="Chromosome 1"/>
</dbReference>
<dbReference type="RNAct" id="Q9P2K9">
    <property type="molecule type" value="protein"/>
</dbReference>
<dbReference type="Bgee" id="ENSG00000204624">
    <property type="expression patterns" value="Expressed in ganglionic eminence and 81 other cell types or tissues"/>
</dbReference>
<dbReference type="ExpressionAtlas" id="Q9P2K9">
    <property type="expression patterns" value="baseline and differential"/>
</dbReference>
<dbReference type="GO" id="GO:0005737">
    <property type="term" value="C:cytoplasm"/>
    <property type="evidence" value="ECO:0000314"/>
    <property type="project" value="UniProtKB"/>
</dbReference>
<dbReference type="GO" id="GO:0030659">
    <property type="term" value="C:cytoplasmic vesicle membrane"/>
    <property type="evidence" value="ECO:0007669"/>
    <property type="project" value="UniProtKB-SubCell"/>
</dbReference>
<dbReference type="GO" id="GO:0005783">
    <property type="term" value="C:endoplasmic reticulum"/>
    <property type="evidence" value="ECO:0000250"/>
    <property type="project" value="UniProtKB"/>
</dbReference>
<dbReference type="GO" id="GO:0005789">
    <property type="term" value="C:endoplasmic reticulum membrane"/>
    <property type="evidence" value="ECO:0007669"/>
    <property type="project" value="UniProtKB-SubCell"/>
</dbReference>
<dbReference type="GO" id="GO:0016020">
    <property type="term" value="C:membrane"/>
    <property type="evidence" value="ECO:0000303"/>
    <property type="project" value="UniProtKB"/>
</dbReference>
<dbReference type="GO" id="GO:0031965">
    <property type="term" value="C:nuclear membrane"/>
    <property type="evidence" value="ECO:0000250"/>
    <property type="project" value="UniProtKB"/>
</dbReference>
<dbReference type="GO" id="GO:0030154">
    <property type="term" value="P:cell differentiation"/>
    <property type="evidence" value="ECO:0007669"/>
    <property type="project" value="UniProtKB-KW"/>
</dbReference>
<dbReference type="GO" id="GO:0042632">
    <property type="term" value="P:cholesterol homeostasis"/>
    <property type="evidence" value="ECO:0000250"/>
    <property type="project" value="UniProtKB"/>
</dbReference>
<dbReference type="GO" id="GO:0008203">
    <property type="term" value="P:cholesterol metabolic process"/>
    <property type="evidence" value="ECO:0007669"/>
    <property type="project" value="UniProtKB-KW"/>
</dbReference>
<dbReference type="GO" id="GO:0045665">
    <property type="term" value="P:negative regulation of neuron differentiation"/>
    <property type="evidence" value="ECO:0000314"/>
    <property type="project" value="UniProtKB"/>
</dbReference>
<dbReference type="GO" id="GO:0045834">
    <property type="term" value="P:positive regulation of lipid metabolic process"/>
    <property type="evidence" value="ECO:0000314"/>
    <property type="project" value="UniProtKB"/>
</dbReference>
<dbReference type="GO" id="GO:2000179">
    <property type="term" value="P:positive regulation of neural precursor cell proliferation"/>
    <property type="evidence" value="ECO:0000314"/>
    <property type="project" value="UniProtKB"/>
</dbReference>
<dbReference type="GO" id="GO:0032368">
    <property type="term" value="P:regulation of lipid transport"/>
    <property type="evidence" value="ECO:0000303"/>
    <property type="project" value="UniProtKB"/>
</dbReference>
<dbReference type="GO" id="GO:0007224">
    <property type="term" value="P:smoothened signaling pathway"/>
    <property type="evidence" value="ECO:0000303"/>
    <property type="project" value="UniProtKB"/>
</dbReference>
<dbReference type="FunFam" id="1.20.1640.10:FF:000015">
    <property type="entry name" value="Dispatched RND transporter family member 3"/>
    <property type="match status" value="1"/>
</dbReference>
<dbReference type="FunFam" id="1.20.1640.10:FF:000022">
    <property type="entry name" value="Dispatched RND transporter family member 3"/>
    <property type="match status" value="1"/>
</dbReference>
<dbReference type="Gene3D" id="1.20.1640.10">
    <property type="entry name" value="Multidrug efflux transporter AcrB transmembrane domain"/>
    <property type="match status" value="2"/>
</dbReference>
<dbReference type="InterPro" id="IPR042480">
    <property type="entry name" value="DISP3"/>
</dbReference>
<dbReference type="InterPro" id="IPR053954">
    <property type="entry name" value="DUF7023"/>
</dbReference>
<dbReference type="InterPro" id="IPR053958">
    <property type="entry name" value="HMGCR/SNAP/NPC1-like_SSD"/>
</dbReference>
<dbReference type="InterPro" id="IPR004869">
    <property type="entry name" value="MMPL_dom"/>
</dbReference>
<dbReference type="InterPro" id="IPR000731">
    <property type="entry name" value="SSD"/>
</dbReference>
<dbReference type="PANTHER" id="PTHR46687">
    <property type="entry name" value="PROTEIN DISPATCHED HOMOLOG 3"/>
    <property type="match status" value="1"/>
</dbReference>
<dbReference type="PANTHER" id="PTHR46687:SF1">
    <property type="entry name" value="PROTEIN DISPATCHED HOMOLOG 3"/>
    <property type="match status" value="1"/>
</dbReference>
<dbReference type="Pfam" id="PF22894">
    <property type="entry name" value="DUF7023"/>
    <property type="match status" value="1"/>
</dbReference>
<dbReference type="Pfam" id="PF03176">
    <property type="entry name" value="MMPL"/>
    <property type="match status" value="1"/>
</dbReference>
<dbReference type="Pfam" id="PF12349">
    <property type="entry name" value="Sterol-sensing"/>
    <property type="match status" value="1"/>
</dbReference>
<dbReference type="SUPFAM" id="SSF82866">
    <property type="entry name" value="Multidrug efflux transporter AcrB transmembrane domain"/>
    <property type="match status" value="2"/>
</dbReference>
<dbReference type="PROSITE" id="PS50156">
    <property type="entry name" value="SSD"/>
    <property type="match status" value="1"/>
</dbReference>
<keyword id="KW-0025">Alternative splicing</keyword>
<keyword id="KW-0153">Cholesterol metabolism</keyword>
<keyword id="KW-0968">Cytoplasmic vesicle</keyword>
<keyword id="KW-0221">Differentiation</keyword>
<keyword id="KW-0256">Endoplasmic reticulum</keyword>
<keyword id="KW-0325">Glycoprotein</keyword>
<keyword id="KW-0443">Lipid metabolism</keyword>
<keyword id="KW-0472">Membrane</keyword>
<keyword id="KW-0539">Nucleus</keyword>
<keyword id="KW-1267">Proteomics identification</keyword>
<keyword id="KW-1185">Reference proteome</keyword>
<keyword id="KW-0753">Steroid metabolism</keyword>
<keyword id="KW-1207">Sterol metabolism</keyword>
<keyword id="KW-0812">Transmembrane</keyword>
<keyword id="KW-1133">Transmembrane helix</keyword>
<gene>
    <name evidence="9 12" type="primary">DISP3</name>
    <name type="synonym">KIAA1337</name>
    <name type="synonym">PTCHD2</name>
</gene>
<reference key="1">
    <citation type="journal article" date="2000" name="DNA Res.">
        <title>Prediction of the coding sequences of unidentified human genes. XVI. The complete sequences of 150 new cDNA clones from brain which code for large proteins in vitro.</title>
        <authorList>
            <person name="Nagase T."/>
            <person name="Kikuno R."/>
            <person name="Ishikawa K."/>
            <person name="Hirosawa M."/>
            <person name="Ohara O."/>
        </authorList>
    </citation>
    <scope>NUCLEOTIDE SEQUENCE [LARGE SCALE MRNA] (ISOFORM 1)</scope>
    <scope>VARIANTS SER-182 AND THR-650</scope>
    <source>
        <tissue>Brain</tissue>
    </source>
</reference>
<reference key="2">
    <citation type="journal article" date="2006" name="Nature">
        <title>The DNA sequence and biological annotation of human chromosome 1.</title>
        <authorList>
            <person name="Gregory S.G."/>
            <person name="Barlow K.F."/>
            <person name="McLay K.E."/>
            <person name="Kaul R."/>
            <person name="Swarbreck D."/>
            <person name="Dunham A."/>
            <person name="Scott C.E."/>
            <person name="Howe K.L."/>
            <person name="Woodfine K."/>
            <person name="Spencer C.C.A."/>
            <person name="Jones M.C."/>
            <person name="Gillson C."/>
            <person name="Searle S."/>
            <person name="Zhou Y."/>
            <person name="Kokocinski F."/>
            <person name="McDonald L."/>
            <person name="Evans R."/>
            <person name="Phillips K."/>
            <person name="Atkinson A."/>
            <person name="Cooper R."/>
            <person name="Jones C."/>
            <person name="Hall R.E."/>
            <person name="Andrews T.D."/>
            <person name="Lloyd C."/>
            <person name="Ainscough R."/>
            <person name="Almeida J.P."/>
            <person name="Ambrose K.D."/>
            <person name="Anderson F."/>
            <person name="Andrew R.W."/>
            <person name="Ashwell R.I.S."/>
            <person name="Aubin K."/>
            <person name="Babbage A.K."/>
            <person name="Bagguley C.L."/>
            <person name="Bailey J."/>
            <person name="Beasley H."/>
            <person name="Bethel G."/>
            <person name="Bird C.P."/>
            <person name="Bray-Allen S."/>
            <person name="Brown J.Y."/>
            <person name="Brown A.J."/>
            <person name="Buckley D."/>
            <person name="Burton J."/>
            <person name="Bye J."/>
            <person name="Carder C."/>
            <person name="Chapman J.C."/>
            <person name="Clark S.Y."/>
            <person name="Clarke G."/>
            <person name="Clee C."/>
            <person name="Cobley V."/>
            <person name="Collier R.E."/>
            <person name="Corby N."/>
            <person name="Coville G.J."/>
            <person name="Davies J."/>
            <person name="Deadman R."/>
            <person name="Dunn M."/>
            <person name="Earthrowl M."/>
            <person name="Ellington A.G."/>
            <person name="Errington H."/>
            <person name="Frankish A."/>
            <person name="Frankland J."/>
            <person name="French L."/>
            <person name="Garner P."/>
            <person name="Garnett J."/>
            <person name="Gay L."/>
            <person name="Ghori M.R.J."/>
            <person name="Gibson R."/>
            <person name="Gilby L.M."/>
            <person name="Gillett W."/>
            <person name="Glithero R.J."/>
            <person name="Grafham D.V."/>
            <person name="Griffiths C."/>
            <person name="Griffiths-Jones S."/>
            <person name="Grocock R."/>
            <person name="Hammond S."/>
            <person name="Harrison E.S.I."/>
            <person name="Hart E."/>
            <person name="Haugen E."/>
            <person name="Heath P.D."/>
            <person name="Holmes S."/>
            <person name="Holt K."/>
            <person name="Howden P.J."/>
            <person name="Hunt A.R."/>
            <person name="Hunt S.E."/>
            <person name="Hunter G."/>
            <person name="Isherwood J."/>
            <person name="James R."/>
            <person name="Johnson C."/>
            <person name="Johnson D."/>
            <person name="Joy A."/>
            <person name="Kay M."/>
            <person name="Kershaw J.K."/>
            <person name="Kibukawa M."/>
            <person name="Kimberley A.M."/>
            <person name="King A."/>
            <person name="Knights A.J."/>
            <person name="Lad H."/>
            <person name="Laird G."/>
            <person name="Lawlor S."/>
            <person name="Leongamornlert D.A."/>
            <person name="Lloyd D.M."/>
            <person name="Loveland J."/>
            <person name="Lovell J."/>
            <person name="Lush M.J."/>
            <person name="Lyne R."/>
            <person name="Martin S."/>
            <person name="Mashreghi-Mohammadi M."/>
            <person name="Matthews L."/>
            <person name="Matthews N.S.W."/>
            <person name="McLaren S."/>
            <person name="Milne S."/>
            <person name="Mistry S."/>
            <person name="Moore M.J.F."/>
            <person name="Nickerson T."/>
            <person name="O'Dell C.N."/>
            <person name="Oliver K."/>
            <person name="Palmeiri A."/>
            <person name="Palmer S.A."/>
            <person name="Parker A."/>
            <person name="Patel D."/>
            <person name="Pearce A.V."/>
            <person name="Peck A.I."/>
            <person name="Pelan S."/>
            <person name="Phelps K."/>
            <person name="Phillimore B.J."/>
            <person name="Plumb R."/>
            <person name="Rajan J."/>
            <person name="Raymond C."/>
            <person name="Rouse G."/>
            <person name="Saenphimmachak C."/>
            <person name="Sehra H.K."/>
            <person name="Sheridan E."/>
            <person name="Shownkeen R."/>
            <person name="Sims S."/>
            <person name="Skuce C.D."/>
            <person name="Smith M."/>
            <person name="Steward C."/>
            <person name="Subramanian S."/>
            <person name="Sycamore N."/>
            <person name="Tracey A."/>
            <person name="Tromans A."/>
            <person name="Van Helmond Z."/>
            <person name="Wall M."/>
            <person name="Wallis J.M."/>
            <person name="White S."/>
            <person name="Whitehead S.L."/>
            <person name="Wilkinson J.E."/>
            <person name="Willey D.L."/>
            <person name="Williams H."/>
            <person name="Wilming L."/>
            <person name="Wray P.W."/>
            <person name="Wu Z."/>
            <person name="Coulson A."/>
            <person name="Vaudin M."/>
            <person name="Sulston J.E."/>
            <person name="Durbin R.M."/>
            <person name="Hubbard T."/>
            <person name="Wooster R."/>
            <person name="Dunham I."/>
            <person name="Carter N.P."/>
            <person name="McVean G."/>
            <person name="Ross M.T."/>
            <person name="Harrow J."/>
            <person name="Olson M.V."/>
            <person name="Beck S."/>
            <person name="Rogers J."/>
            <person name="Bentley D.R."/>
        </authorList>
    </citation>
    <scope>NUCLEOTIDE SEQUENCE [LARGE SCALE GENOMIC DNA]</scope>
</reference>
<reference key="3">
    <citation type="submission" date="1999-09" db="EMBL/GenBank/DDBJ databases">
        <authorList>
            <person name="Rhodes S."/>
            <person name="Huckle E."/>
        </authorList>
    </citation>
    <scope>NUCLEOTIDE SEQUENCE [LARGE SCALE MRNA] OF 315-1392 (ISOFORM 2)</scope>
</reference>
<reference key="4">
    <citation type="journal article" date="2005" name="Int. J. Oncol.">
        <title>Identification and characterization of DISP3 gene in silico.</title>
        <authorList>
            <person name="Katoh Y."/>
            <person name="Katoh M."/>
        </authorList>
    </citation>
    <scope>IDENTIFICATION</scope>
    <scope>TISSUE SPECIFICITY</scope>
    <scope>DEVELOPMENTAL STAGE</scope>
</reference>
<reference key="5">
    <citation type="journal article" date="2009" name="Mol. Endocrinol.">
        <title>DISP3, a sterol-sensing domain-containing protein that links thyroid hormone action and cholesterol metabolism.</title>
        <authorList>
            <person name="Zikova M."/>
            <person name="Corlett A."/>
            <person name="Bendova Z."/>
            <person name="Pajer P."/>
            <person name="Bartunek P."/>
        </authorList>
    </citation>
    <scope>SUBCELLULAR LOCATION</scope>
    <scope>INDUCTION</scope>
</reference>
<reference key="6">
    <citation type="journal article" date="2014" name="FEBS Lett.">
        <title>DISP3 promotes proliferation and delays differentiation of neural progenitor cells.</title>
        <authorList>
            <person name="Zikova M."/>
            <person name="Konirova J."/>
            <person name="Ditrychova K."/>
            <person name="Corlett A."/>
            <person name="Kolar M."/>
            <person name="Bartunek P."/>
        </authorList>
    </citation>
    <scope>FUNCTION</scope>
</reference>